<accession>Q29450</accession>
<accession>O02856</accession>
<sequence>MPAKGRYFLNEGEEGPDQDALYEKYRLTSQHGPLLLMLLLVAIAACTTLIVITFSYGDPSRHRAVLGTAFFTLAMFVLLYALVYVECLDRRGLRISALLIWGCLVTLGYVLVFDFDSPRKDTLCLWGRCPSSSFVVFVVYTLLPFSMWGAVTAGLVSSISHLLVLAMHQEDFTSPVGLKLLATAVVFVCGNLTGAFHKHHMQDASHDLFTYTVKCIQIRRKLRIEKRQQENLLLSVLPAHISMGMKLAIIERLKERGDRRYLPDNNFHNLYVKRHQNVSILYADIVGFTRLASDCSPKELVVVLNELFGKFDQIAKANECMRIKILGDCYYCVSGLPVSLPNHARNCVKMGLDMCEAIKQVREATGVDISMRVGIHSGNVLCGVIGLRKWQYDVWSHDVSLANRMEAAGVPGRVHITEATLKHLDKAYEVEDGHGQQRDPYLKEMNIRTYLVIDPRSQQPPQPSQHNSKNKGNATLKMRASVRMTRYLESWGAARPFAHLNQRESVSSSETLVSHGRRPKAVPLRRHRTPDRSASPKGRSEDDSYDDEMLSAIEGLSSTRPCCSKSDDFSTFGSIFLEKGFEREYRLAPIPRVRYYFACASLVFVCILLIHVLLLYSMKTLGVSFGLVACVLGLVLGLCFADVFLRCCPALGKLRAIAESVETQPLLRVSLAILTIGSLLVIAVVNLPLMPFRDRGLTAGNETGLRAVSGWEMSPCYLLPYYTCSCILAFIACSVFLRMSLELKVVLLTVALVAYLVLFNVYPSWQWDCCGHSLGNLTGTNGTLSSSSCSWHLKTMTNFYLVLFYTTLIMLSRQIDYYCRLDCLWKKKFKKEHEEFETMENVNRLLLENVLPAHVAAHFIGDKLNEDWYHQSYDCVCVMFASVPDFKVFYTECDVNKEGLECLRLLNEIIADFDELLLKPKFSGVEKIKTIGSTYMAAAGLSVPSGPENQDLERQHAHIGIMVEFSTALMSKLDGINRHSFNSFRLRVGINHGPVIAGVIGARKPQYDIWGNTVNVASRMESTGELGKIQVTEETCTILQGLGYSCECRGLIDVKGKGELRTYFVCTDTAKFQGLGLN</sequence>
<feature type="chain" id="PRO_0000195702" description="Adenylate cyclase type 7">
    <location>
        <begin position="1"/>
        <end position="1078"/>
    </location>
</feature>
<feature type="topological domain" description="Cytoplasmic" evidence="5">
    <location>
        <begin position="1"/>
        <end position="33"/>
    </location>
</feature>
<feature type="transmembrane region" description="Helical" evidence="5">
    <location>
        <begin position="34"/>
        <end position="54"/>
    </location>
</feature>
<feature type="transmembrane region" description="Helical" evidence="5">
    <location>
        <begin position="63"/>
        <end position="83"/>
    </location>
</feature>
<feature type="transmembrane region" description="Helical" evidence="5">
    <location>
        <begin position="95"/>
        <end position="120"/>
    </location>
</feature>
<feature type="transmembrane region" description="Helical" evidence="5">
    <location>
        <begin position="125"/>
        <end position="145"/>
    </location>
</feature>
<feature type="transmembrane region" description="Helical" evidence="5">
    <location>
        <begin position="150"/>
        <end position="170"/>
    </location>
</feature>
<feature type="transmembrane region" description="Helical" evidence="5">
    <location>
        <begin position="176"/>
        <end position="196"/>
    </location>
</feature>
<feature type="topological domain" description="Cytoplasmic" evidence="5">
    <location>
        <begin position="197"/>
        <end position="594"/>
    </location>
</feature>
<feature type="transmembrane region" description="Helical" evidence="5">
    <location>
        <begin position="595"/>
        <end position="615"/>
    </location>
</feature>
<feature type="transmembrane region" description="Helical" evidence="5">
    <location>
        <begin position="620"/>
        <end position="640"/>
    </location>
</feature>
<feature type="transmembrane region" description="Helical" evidence="5">
    <location>
        <begin position="669"/>
        <end position="688"/>
    </location>
</feature>
<feature type="transmembrane region" description="Helical" evidence="5">
    <location>
        <begin position="718"/>
        <end position="737"/>
    </location>
</feature>
<feature type="transmembrane region" description="Helical" evidence="5">
    <location>
        <begin position="746"/>
        <end position="773"/>
    </location>
</feature>
<feature type="transmembrane region" description="Helical" evidence="5">
    <location>
        <begin position="792"/>
        <end position="812"/>
    </location>
</feature>
<feature type="topological domain" description="Cytoplasmic" evidence="5">
    <location>
        <begin position="813"/>
        <end position="1078"/>
    </location>
</feature>
<feature type="region of interest" description="Disordered" evidence="7">
    <location>
        <begin position="455"/>
        <end position="476"/>
    </location>
</feature>
<feature type="region of interest" description="Mediates regulation of adenylate cyclase activity by C5 alpha-induced G- beta and gamma pathway" evidence="3">
    <location>
        <begin position="477"/>
        <end position="482"/>
    </location>
</feature>
<feature type="region of interest" description="Mediates regulation of adenylate cyclase activity by sphingosine 1-phosphate-induced G alpha 13 pathway" evidence="3">
    <location>
        <begin position="491"/>
        <end position="499"/>
    </location>
</feature>
<feature type="region of interest" description="Disordered" evidence="7">
    <location>
        <begin position="502"/>
        <end position="545"/>
    </location>
</feature>
<feature type="region of interest" description="Modulates adenylate cyclase activity by modulating the binding of G(s)alpha to the high-affinity G(s)alpha binding site in 7C1a/7C2" evidence="3">
    <location>
        <begin position="506"/>
        <end position="584"/>
    </location>
</feature>
<feature type="compositionally biased region" description="Polar residues" evidence="7">
    <location>
        <begin position="503"/>
        <end position="512"/>
    </location>
</feature>
<feature type="compositionally biased region" description="Basic residues" evidence="7">
    <location>
        <begin position="515"/>
        <end position="529"/>
    </location>
</feature>
<feature type="binding site" evidence="2">
    <location>
        <begin position="284"/>
        <end position="289"/>
    </location>
    <ligand>
        <name>ATP</name>
        <dbReference type="ChEBI" id="CHEBI:30616"/>
    </ligand>
</feature>
<feature type="binding site" evidence="6">
    <location>
        <position position="284"/>
    </location>
    <ligand>
        <name>Mg(2+)</name>
        <dbReference type="ChEBI" id="CHEBI:18420"/>
        <label>1</label>
        <note>catalytic</note>
    </ligand>
</feature>
<feature type="binding site" evidence="6">
    <location>
        <position position="284"/>
    </location>
    <ligand>
        <name>Mg(2+)</name>
        <dbReference type="ChEBI" id="CHEBI:18420"/>
        <label>2</label>
        <note>catalytic</note>
    </ligand>
</feature>
<feature type="binding site" evidence="6">
    <location>
        <position position="285"/>
    </location>
    <ligand>
        <name>Mg(2+)</name>
        <dbReference type="ChEBI" id="CHEBI:18420"/>
        <label>2</label>
        <note>catalytic</note>
    </ligand>
</feature>
<feature type="binding site" evidence="2">
    <location>
        <begin position="326"/>
        <end position="328"/>
    </location>
    <ligand>
        <name>ATP</name>
        <dbReference type="ChEBI" id="CHEBI:30616"/>
    </ligand>
</feature>
<feature type="binding site" evidence="6">
    <location>
        <position position="328"/>
    </location>
    <ligand>
        <name>Mg(2+)</name>
        <dbReference type="ChEBI" id="CHEBI:18420"/>
        <label>1</label>
        <note>catalytic</note>
    </ligand>
</feature>
<feature type="binding site" evidence="6">
    <location>
        <position position="328"/>
    </location>
    <ligand>
        <name>Mg(2+)</name>
        <dbReference type="ChEBI" id="CHEBI:18420"/>
        <label>2</label>
        <note>catalytic</note>
    </ligand>
</feature>
<feature type="binding site" evidence="2">
    <location>
        <position position="372"/>
    </location>
    <ligand>
        <name>ATP</name>
        <dbReference type="ChEBI" id="CHEBI:30616"/>
    </ligand>
</feature>
<feature type="binding site" evidence="1">
    <location>
        <position position="929"/>
    </location>
    <ligand>
        <name>ATP</name>
        <dbReference type="ChEBI" id="CHEBI:30616"/>
    </ligand>
</feature>
<feature type="binding site" evidence="1">
    <location>
        <begin position="1008"/>
        <end position="1010"/>
    </location>
    <ligand>
        <name>ATP</name>
        <dbReference type="ChEBI" id="CHEBI:30616"/>
    </ligand>
</feature>
<feature type="binding site" evidence="1">
    <location>
        <begin position="1015"/>
        <end position="1019"/>
    </location>
    <ligand>
        <name>ATP</name>
        <dbReference type="ChEBI" id="CHEBI:30616"/>
    </ligand>
</feature>
<feature type="binding site" evidence="1">
    <location>
        <position position="1055"/>
    </location>
    <ligand>
        <name>ATP</name>
        <dbReference type="ChEBI" id="CHEBI:30616"/>
    </ligand>
</feature>
<feature type="glycosylation site" description="N-linked (GlcNAc...) asparagine" evidence="5">
    <location>
        <position position="701"/>
    </location>
</feature>
<feature type="glycosylation site" description="N-linked (GlcNAc...) asparagine" evidence="5">
    <location>
        <position position="776"/>
    </location>
</feature>
<feature type="glycosylation site" description="N-linked (GlcNAc...) asparagine" evidence="5">
    <location>
        <position position="781"/>
    </location>
</feature>
<dbReference type="EC" id="4.6.1.1"/>
<dbReference type="EMBL" id="Z49806">
    <property type="protein sequence ID" value="CAA89894.1"/>
    <property type="status" value="ALT_INIT"/>
    <property type="molecule type" value="mRNA"/>
</dbReference>
<dbReference type="RefSeq" id="NP_776655.1">
    <property type="nucleotide sequence ID" value="NM_174230.2"/>
</dbReference>
<dbReference type="RefSeq" id="XP_005218501.1">
    <property type="nucleotide sequence ID" value="XM_005218444.3"/>
</dbReference>
<dbReference type="SMR" id="Q29450"/>
<dbReference type="FunCoup" id="Q29450">
    <property type="interactions" value="710"/>
</dbReference>
<dbReference type="STRING" id="9913.ENSBTAP00000064319"/>
<dbReference type="GlyCosmos" id="Q29450">
    <property type="glycosylation" value="3 sites, No reported glycans"/>
</dbReference>
<dbReference type="GlyGen" id="Q29450">
    <property type="glycosylation" value="3 sites"/>
</dbReference>
<dbReference type="PaxDb" id="9913-ENSBTAP00000008153"/>
<dbReference type="GeneID" id="281603"/>
<dbReference type="KEGG" id="bta:281603"/>
<dbReference type="CTD" id="113"/>
<dbReference type="eggNOG" id="KOG3619">
    <property type="taxonomic scope" value="Eukaryota"/>
</dbReference>
<dbReference type="HOGENOM" id="CLU_001072_2_5_1"/>
<dbReference type="InParanoid" id="Q29450"/>
<dbReference type="OrthoDB" id="10035433at2759"/>
<dbReference type="TreeFam" id="TF313845"/>
<dbReference type="Proteomes" id="UP000009136">
    <property type="component" value="Unplaced"/>
</dbReference>
<dbReference type="GO" id="GO:0005886">
    <property type="term" value="C:plasma membrane"/>
    <property type="evidence" value="ECO:0000314"/>
    <property type="project" value="UniProtKB"/>
</dbReference>
<dbReference type="GO" id="GO:0004016">
    <property type="term" value="F:adenylate cyclase activity"/>
    <property type="evidence" value="ECO:0000250"/>
    <property type="project" value="UniProtKB"/>
</dbReference>
<dbReference type="GO" id="GO:0005524">
    <property type="term" value="F:ATP binding"/>
    <property type="evidence" value="ECO:0007669"/>
    <property type="project" value="UniProtKB-KW"/>
</dbReference>
<dbReference type="GO" id="GO:0046872">
    <property type="term" value="F:metal ion binding"/>
    <property type="evidence" value="ECO:0007669"/>
    <property type="project" value="UniProtKB-KW"/>
</dbReference>
<dbReference type="GO" id="GO:0007189">
    <property type="term" value="P:adenylate cyclase-activating G protein-coupled receptor signaling pathway"/>
    <property type="evidence" value="ECO:0000318"/>
    <property type="project" value="GO_Central"/>
</dbReference>
<dbReference type="GO" id="GO:0006171">
    <property type="term" value="P:cAMP biosynthetic process"/>
    <property type="evidence" value="ECO:0000318"/>
    <property type="project" value="GO_Central"/>
</dbReference>
<dbReference type="GO" id="GO:0071361">
    <property type="term" value="P:cellular response to ethanol"/>
    <property type="evidence" value="ECO:0000250"/>
    <property type="project" value="UniProtKB"/>
</dbReference>
<dbReference type="GO" id="GO:0071285">
    <property type="term" value="P:cellular response to lithium ion"/>
    <property type="evidence" value="ECO:0000250"/>
    <property type="project" value="UniProtKB"/>
</dbReference>
<dbReference type="GO" id="GO:0035556">
    <property type="term" value="P:intracellular signal transduction"/>
    <property type="evidence" value="ECO:0007669"/>
    <property type="project" value="InterPro"/>
</dbReference>
<dbReference type="GO" id="GO:1900016">
    <property type="term" value="P:negative regulation of cytokine production involved in inflammatory response"/>
    <property type="evidence" value="ECO:0000250"/>
    <property type="project" value="UniProtKB"/>
</dbReference>
<dbReference type="GO" id="GO:0002819">
    <property type="term" value="P:regulation of adaptive immune response"/>
    <property type="evidence" value="ECO:0000250"/>
    <property type="project" value="UniProtKB"/>
</dbReference>
<dbReference type="CDD" id="cd07302">
    <property type="entry name" value="CHD"/>
    <property type="match status" value="2"/>
</dbReference>
<dbReference type="FunFam" id="3.30.70.1230:FF:000003">
    <property type="entry name" value="Adenylate cyclase"/>
    <property type="match status" value="1"/>
</dbReference>
<dbReference type="FunFam" id="3.30.70.1230:FF:000012">
    <property type="entry name" value="Adenylate cyclase"/>
    <property type="match status" value="1"/>
</dbReference>
<dbReference type="Gene3D" id="3.30.70.1230">
    <property type="entry name" value="Nucleotide cyclase"/>
    <property type="match status" value="2"/>
</dbReference>
<dbReference type="InterPro" id="IPR001054">
    <property type="entry name" value="A/G_cyclase"/>
</dbReference>
<dbReference type="InterPro" id="IPR018297">
    <property type="entry name" value="A/G_cyclase_CS"/>
</dbReference>
<dbReference type="InterPro" id="IPR032628">
    <property type="entry name" value="AC_N"/>
</dbReference>
<dbReference type="InterPro" id="IPR030672">
    <property type="entry name" value="Adcy"/>
</dbReference>
<dbReference type="InterPro" id="IPR009398">
    <property type="entry name" value="Adcy_conserved_dom"/>
</dbReference>
<dbReference type="InterPro" id="IPR029787">
    <property type="entry name" value="Nucleotide_cyclase"/>
</dbReference>
<dbReference type="PANTHER" id="PTHR45627">
    <property type="entry name" value="ADENYLATE CYCLASE TYPE 1"/>
    <property type="match status" value="1"/>
</dbReference>
<dbReference type="PANTHER" id="PTHR45627:SF9">
    <property type="entry name" value="ADENYLATE CYCLASE TYPE 7"/>
    <property type="match status" value="1"/>
</dbReference>
<dbReference type="Pfam" id="PF16214">
    <property type="entry name" value="AC_N"/>
    <property type="match status" value="1"/>
</dbReference>
<dbReference type="Pfam" id="PF06327">
    <property type="entry name" value="Adcy_cons_dom"/>
    <property type="match status" value="1"/>
</dbReference>
<dbReference type="Pfam" id="PF00211">
    <property type="entry name" value="Guanylate_cyc"/>
    <property type="match status" value="2"/>
</dbReference>
<dbReference type="PIRSF" id="PIRSF039050">
    <property type="entry name" value="Ade_cyc"/>
    <property type="match status" value="1"/>
</dbReference>
<dbReference type="SMART" id="SM00044">
    <property type="entry name" value="CYCc"/>
    <property type="match status" value="2"/>
</dbReference>
<dbReference type="SUPFAM" id="SSF55073">
    <property type="entry name" value="Nucleotide cyclase"/>
    <property type="match status" value="2"/>
</dbReference>
<dbReference type="PROSITE" id="PS00452">
    <property type="entry name" value="GUANYLATE_CYCLASE_1"/>
    <property type="match status" value="1"/>
</dbReference>
<dbReference type="PROSITE" id="PS50125">
    <property type="entry name" value="GUANYLATE_CYCLASE_2"/>
    <property type="match status" value="2"/>
</dbReference>
<evidence type="ECO:0000250" key="1">
    <source>
        <dbReference type="UniProtKB" id="P26769"/>
    </source>
</evidence>
<evidence type="ECO:0000250" key="2">
    <source>
        <dbReference type="UniProtKB" id="P30803"/>
    </source>
</evidence>
<evidence type="ECO:0000250" key="3">
    <source>
        <dbReference type="UniProtKB" id="P51828"/>
    </source>
</evidence>
<evidence type="ECO:0000250" key="4">
    <source>
        <dbReference type="UniProtKB" id="P51829"/>
    </source>
</evidence>
<evidence type="ECO:0000255" key="5"/>
<evidence type="ECO:0000255" key="6">
    <source>
        <dbReference type="PROSITE-ProRule" id="PRU00099"/>
    </source>
</evidence>
<evidence type="ECO:0000256" key="7">
    <source>
        <dbReference type="SAM" id="MobiDB-lite"/>
    </source>
</evidence>
<evidence type="ECO:0000305" key="8"/>
<protein>
    <recommendedName>
        <fullName evidence="3">Adenylate cyclase type 7</fullName>
        <ecNumber>4.6.1.1</ecNumber>
    </recommendedName>
    <alternativeName>
        <fullName>ATP pyrophosphate-lyase 7</fullName>
    </alternativeName>
    <alternativeName>
        <fullName>Adenylate cyclase type VII</fullName>
    </alternativeName>
    <alternativeName>
        <fullName>Adenylyl cyclase 7</fullName>
    </alternativeName>
</protein>
<comment type="function">
    <text evidence="3 4">Catalyzes the formation of cAMP in response to activation of G protein-coupled receptors. Functions in signaling cascades activated namely by thrombin and sphingosine 1-phosphate and mediates regulation of cAMP synthesis through synergistic action of the stimulatory G alpha protein with GNA13 (By similarity). Also, during inflammation, mediates zymosan-induced increase intracellular cAMP, leading to protein kinase A pathway activation in order to modulate innate immune responses through heterotrimeric G proteins G(12/13) (By similarity). Functions in signaling cascades activated namely by dopamine and C5 alpha chain and mediates regulation of cAMP synthesis through synergistic action of the stimulatory G protein with G beta:gamma complex (By similarity). Functions, through cAMP response regulation, to keep inflammation under control during bacterial infection by sensing the presence of serum factors, such as the bioactive lysophospholipid (LPA) that regulate LPS-induced TNF-alpha production. However, it is also required for the optimal functions of B and T cells during adaptive immune responses by regulating cAMP synthesis in both B and T cells (By similarity).</text>
</comment>
<comment type="catalytic activity">
    <reaction evidence="3">
        <text>ATP = 3',5'-cyclic AMP + diphosphate</text>
        <dbReference type="Rhea" id="RHEA:15389"/>
        <dbReference type="ChEBI" id="CHEBI:30616"/>
        <dbReference type="ChEBI" id="CHEBI:33019"/>
        <dbReference type="ChEBI" id="CHEBI:58165"/>
        <dbReference type="EC" id="4.6.1.1"/>
    </reaction>
</comment>
<comment type="cofactor">
    <cofactor evidence="2">
        <name>Mg(2+)</name>
        <dbReference type="ChEBI" id="CHEBI:18420"/>
    </cofactor>
    <cofactor evidence="2">
        <name>Mn(2+)</name>
        <dbReference type="ChEBI" id="CHEBI:29035"/>
    </cofactor>
    <text evidence="2">Binds 2 magnesium ions per subunit. Is also active with manganese (in vitro).</text>
</comment>
<comment type="activity regulation">
    <text evidence="3 4">Activated by the G protein alpha subunit. Activated by the G protein beta and gamma subunit complex. Activated by GNA13 and GNA12. Ethanol and phorbol 12,13-dibutanoate significantly potentiate adenylate cyclase activity generated in response to the activation of the prostanoid receptor by the agonist prostaglandin E1(1-) in a PKC-dependent manner (By similarity). Inhibited by lithium (By similarity).</text>
</comment>
<comment type="subcellular location">
    <subcellularLocation>
        <location>Membrane</location>
        <topology>Multi-pass membrane protein</topology>
    </subcellularLocation>
</comment>
<comment type="tissue specificity">
    <text>Found exclusively in the retinal pigment epithelium.</text>
</comment>
<comment type="domain">
    <text evidence="1">The protein contains two modules with six transmembrane helices each; both are required for catalytic activity. Isolated N-terminal or C-terminal guanylate cyclase domains have no catalytic activity, but when they are brought together, enzyme activity is restored. The active site is at the interface of the two domains. Both contribute substrate-binding residues, but the catalytic metal ions are bound exclusively via the N-terminal guanylate cyclase domain.</text>
</comment>
<comment type="PTM">
    <text evidence="3">Phosphorylated by PRKCD.</text>
</comment>
<comment type="similarity">
    <text evidence="6">Belongs to the adenylyl cyclase class-4/guanylyl cyclase family.</text>
</comment>
<comment type="sequence caution" evidence="8">
    <conflict type="erroneous initiation">
        <sequence resource="EMBL-CDS" id="CAA89894"/>
    </conflict>
</comment>
<keyword id="KW-0067">ATP-binding</keyword>
<keyword id="KW-0115">cAMP biosynthesis</keyword>
<keyword id="KW-0325">Glycoprotein</keyword>
<keyword id="KW-0456">Lyase</keyword>
<keyword id="KW-0460">Magnesium</keyword>
<keyword id="KW-0464">Manganese</keyword>
<keyword id="KW-0472">Membrane</keyword>
<keyword id="KW-0479">Metal-binding</keyword>
<keyword id="KW-0547">Nucleotide-binding</keyword>
<keyword id="KW-1185">Reference proteome</keyword>
<keyword id="KW-0677">Repeat</keyword>
<keyword id="KW-0812">Transmembrane</keyword>
<keyword id="KW-1133">Transmembrane helix</keyword>
<proteinExistence type="evidence at transcript level"/>
<name>ADCY7_BOVIN</name>
<gene>
    <name evidence="3" type="primary">ADCY7</name>
</gene>
<reference key="1">
    <citation type="journal article" date="1996" name="FEBS Lett.">
        <title>Cloning and expression of a bovine adenylyl cyclase type VII specific to the retinal pigment epithelium.</title>
        <authorList>
            <person name="Voelkel H."/>
            <person name="Beitz E."/>
            <person name="Klumpp S."/>
            <person name="Schultz J.E."/>
        </authorList>
    </citation>
    <scope>NUCLEOTIDE SEQUENCE [MRNA]</scope>
    <source>
        <tissue>Retina</tissue>
    </source>
</reference>
<organism>
    <name type="scientific">Bos taurus</name>
    <name type="common">Bovine</name>
    <dbReference type="NCBI Taxonomy" id="9913"/>
    <lineage>
        <taxon>Eukaryota</taxon>
        <taxon>Metazoa</taxon>
        <taxon>Chordata</taxon>
        <taxon>Craniata</taxon>
        <taxon>Vertebrata</taxon>
        <taxon>Euteleostomi</taxon>
        <taxon>Mammalia</taxon>
        <taxon>Eutheria</taxon>
        <taxon>Laurasiatheria</taxon>
        <taxon>Artiodactyla</taxon>
        <taxon>Ruminantia</taxon>
        <taxon>Pecora</taxon>
        <taxon>Bovidae</taxon>
        <taxon>Bovinae</taxon>
        <taxon>Bos</taxon>
    </lineage>
</organism>